<comment type="function">
    <text evidence="5">Probable sodium channel inhibitor.</text>
</comment>
<comment type="subcellular location">
    <subcellularLocation>
        <location evidence="2">Secreted</location>
    </subcellularLocation>
</comment>
<comment type="tissue specificity">
    <text evidence="6">Expressed by the venom gland.</text>
</comment>
<comment type="domain">
    <text evidence="5">Has the structural arrangement of an alpha-helix connected to antiparallel beta-sheets by disulfide bonds (CS-alpha/beta).</text>
</comment>
<comment type="miscellaneous">
    <text evidence="3">Negative results: has no effect on Nav1.8/SCN10A sodium channel from the grasshopper mouse, a species pain-resistant to C.sculpturatus venom.</text>
</comment>
<comment type="similarity">
    <text evidence="5">Belongs to the long (4 C-C) scorpion toxin superfamily. Sodium channel inhibitor family.</text>
</comment>
<evidence type="ECO:0000255" key="1">
    <source>
        <dbReference type="PROSITE-ProRule" id="PRU01210"/>
    </source>
</evidence>
<evidence type="ECO:0000269" key="2">
    <source>
    </source>
</evidence>
<evidence type="ECO:0000269" key="3">
    <source>
    </source>
</evidence>
<evidence type="ECO:0000303" key="4">
    <source>
    </source>
</evidence>
<evidence type="ECO:0000305" key="5"/>
<evidence type="ECO:0000305" key="6">
    <source>
    </source>
</evidence>
<protein>
    <recommendedName>
        <fullName evidence="4">Toxin NaTx-22</fullName>
    </recommendedName>
</protein>
<reference key="1">
    <citation type="journal article" date="2021" name="Toxins">
        <title>Identification and characterization of novel proteins from Arizona Bark scorpion venom that inhibit Nav1.8, a voltage-gated sodium channel regulator of pain signaling.</title>
        <authorList>
            <person name="Abd El-Aziz T.M."/>
            <person name="Xiao Y."/>
            <person name="Kline J."/>
            <person name="Gridley H."/>
            <person name="Heaston A."/>
            <person name="Linse K.D."/>
            <person name="Ward M.J."/>
            <person name="Rokyta D.R."/>
            <person name="Stockand J.D."/>
            <person name="Cummins T.R."/>
            <person name="Fornelli L."/>
            <person name="Rowe A.H."/>
        </authorList>
    </citation>
    <scope>NUCLEOTIDE SEQUENCE [MRNA]</scope>
    <scope>PROTEIN SEQUENCE OF 32-61</scope>
    <scope>IDENTIFICATION BY MASS SPECTROMETRY</scope>
    <scope>SUBCELLULAR LOCATION</scope>
    <source>
        <tissue>Venom</tissue>
        <tissue>Venom gland</tissue>
    </source>
</reference>
<reference key="2">
    <citation type="journal article" date="2022" name="Front. Pharmacol.">
        <title>Structural and functional characterization of a novel scorpion toxin that inhibits NaV1.8 via interactions with the DI voltage sensor and DII pore module.</title>
        <authorList>
            <person name="George K."/>
            <person name="Lopez-Mateos D."/>
            <person name="Abd El-Aziz T.M."/>
            <person name="Xiao Y."/>
            <person name="Kline J."/>
            <person name="Bao H."/>
            <person name="Raza S."/>
            <person name="Stockand J.D."/>
            <person name="Cummins T.R."/>
            <person name="Fornelli L."/>
            <person name="Rowe M.P."/>
            <person name="Yarov-Yarovoy V."/>
            <person name="Rowe A.H."/>
        </authorList>
    </citation>
    <scope>ACTIVITY ON NAV1.8/SCN10A CHANNEL</scope>
    <scope>SYNTHESIS</scope>
</reference>
<proteinExistence type="evidence at protein level"/>
<accession>P0DRC7</accession>
<name>SCX22_CENSC</name>
<organism>
    <name type="scientific">Centruroides sculpturatus</name>
    <name type="common">Arizona bark scorpion</name>
    <dbReference type="NCBI Taxonomy" id="218467"/>
    <lineage>
        <taxon>Eukaryota</taxon>
        <taxon>Metazoa</taxon>
        <taxon>Ecdysozoa</taxon>
        <taxon>Arthropoda</taxon>
        <taxon>Chelicerata</taxon>
        <taxon>Arachnida</taxon>
        <taxon>Scorpiones</taxon>
        <taxon>Buthida</taxon>
        <taxon>Buthoidea</taxon>
        <taxon>Buthidae</taxon>
        <taxon>Centruroides</taxon>
    </lineage>
</organism>
<dbReference type="SMR" id="P0DRC7"/>
<dbReference type="GO" id="GO:0005576">
    <property type="term" value="C:extracellular region"/>
    <property type="evidence" value="ECO:0007669"/>
    <property type="project" value="UniProtKB-SubCell"/>
</dbReference>
<dbReference type="GO" id="GO:0019871">
    <property type="term" value="F:sodium channel inhibitor activity"/>
    <property type="evidence" value="ECO:0007669"/>
    <property type="project" value="InterPro"/>
</dbReference>
<dbReference type="GO" id="GO:0090729">
    <property type="term" value="F:toxin activity"/>
    <property type="evidence" value="ECO:0007669"/>
    <property type="project" value="UniProtKB-KW"/>
</dbReference>
<dbReference type="GO" id="GO:0006952">
    <property type="term" value="P:defense response"/>
    <property type="evidence" value="ECO:0007669"/>
    <property type="project" value="InterPro"/>
</dbReference>
<dbReference type="CDD" id="cd23106">
    <property type="entry name" value="neurotoxins_LC_scorpion"/>
    <property type="match status" value="1"/>
</dbReference>
<dbReference type="Gene3D" id="3.30.30.10">
    <property type="entry name" value="Knottin, scorpion toxin-like"/>
    <property type="match status" value="1"/>
</dbReference>
<dbReference type="InterPro" id="IPR044062">
    <property type="entry name" value="LCN-type_CS_alpha_beta_dom"/>
</dbReference>
<dbReference type="InterPro" id="IPR003614">
    <property type="entry name" value="Scorpion_toxin-like"/>
</dbReference>
<dbReference type="InterPro" id="IPR036574">
    <property type="entry name" value="Scorpion_toxin-like_sf"/>
</dbReference>
<dbReference type="InterPro" id="IPR018218">
    <property type="entry name" value="Scorpion_toxinL"/>
</dbReference>
<dbReference type="InterPro" id="IPR002061">
    <property type="entry name" value="Scorpion_toxinL/defensin"/>
</dbReference>
<dbReference type="Pfam" id="PF00537">
    <property type="entry name" value="Toxin_3"/>
    <property type="match status" value="1"/>
</dbReference>
<dbReference type="PRINTS" id="PR00285">
    <property type="entry name" value="SCORPNTOXIN"/>
</dbReference>
<dbReference type="SMART" id="SM00505">
    <property type="entry name" value="Knot1"/>
    <property type="match status" value="1"/>
</dbReference>
<dbReference type="SUPFAM" id="SSF57095">
    <property type="entry name" value="Scorpion toxin-like"/>
    <property type="match status" value="1"/>
</dbReference>
<dbReference type="PROSITE" id="PS51863">
    <property type="entry name" value="LCN_CSAB"/>
    <property type="match status" value="1"/>
</dbReference>
<keyword id="KW-0903">Direct protein sequencing</keyword>
<keyword id="KW-1015">Disulfide bond</keyword>
<keyword id="KW-0872">Ion channel impairing toxin</keyword>
<keyword id="KW-0528">Neurotoxin</keyword>
<keyword id="KW-0964">Secreted</keyword>
<keyword id="KW-0800">Toxin</keyword>
<keyword id="KW-0738">Voltage-gated sodium channel impairing toxin</keyword>
<feature type="chain" id="PRO_0000459709" description="Toxin NaTx-22" evidence="6">
    <location>
        <begin position="1"/>
        <end position="65"/>
    </location>
</feature>
<feature type="domain" description="LCN-type CS-alpha/beta" evidence="1">
    <location>
        <begin position="1"/>
        <end position="64"/>
    </location>
</feature>
<feature type="disulfide bond" evidence="1">
    <location>
        <begin position="12"/>
        <end position="63"/>
    </location>
</feature>
<feature type="disulfide bond" evidence="1">
    <location>
        <begin position="16"/>
        <end position="39"/>
    </location>
</feature>
<feature type="disulfide bond" evidence="1">
    <location>
        <begin position="25"/>
        <end position="44"/>
    </location>
</feature>
<feature type="disulfide bond" evidence="1">
    <location>
        <begin position="29"/>
        <end position="46"/>
    </location>
</feature>
<sequence>KDGYPVIKTTGCKLICVGISDNKSCDRFCKKQGGSHGYCHAFGCWCEGLSGSTPTYPIPGKTCKK</sequence>